<sequence>MSIEVRGLSKRFGAFRALDEVSLHIETGELVALLGPSGCGKTTLLRIIAGLESADAGSVLFAGEDATEVDVRQRQVGFVFQHYALFKHMTVFENVAFGLRVRHRSQRPSEARIRAKVLDLLGLVQLDWLADRYPAQLSGGQRQRIALARALAVEPRVLLLDEPFGALDAKVRKELRRWLRRLHDELHVASVFVTHDQEEALEVTDRVVLMNAGRIEQVGSPREVWERPATPFVYGFLGDVNQLHGHATRGVWRLGEVALPAPDLPEADNQRAIAYVRPHDIDLARAGTAAPGIPVRLNHVYLAGPSAYLELARQDDQAIIEAQVPEPLFRSLGLKEGEALLAQPRRARVFAVQP</sequence>
<reference key="1">
    <citation type="journal article" date="2003" name="Nat. Genet.">
        <title>Comparative analysis of the genome sequences of Bordetella pertussis, Bordetella parapertussis and Bordetella bronchiseptica.</title>
        <authorList>
            <person name="Parkhill J."/>
            <person name="Sebaihia M."/>
            <person name="Preston A."/>
            <person name="Murphy L.D."/>
            <person name="Thomson N.R."/>
            <person name="Harris D.E."/>
            <person name="Holden M.T.G."/>
            <person name="Churcher C.M."/>
            <person name="Bentley S.D."/>
            <person name="Mungall K.L."/>
            <person name="Cerdeno-Tarraga A.-M."/>
            <person name="Temple L."/>
            <person name="James K.D."/>
            <person name="Harris B."/>
            <person name="Quail M.A."/>
            <person name="Achtman M."/>
            <person name="Atkin R."/>
            <person name="Baker S."/>
            <person name="Basham D."/>
            <person name="Bason N."/>
            <person name="Cherevach I."/>
            <person name="Chillingworth T."/>
            <person name="Collins M."/>
            <person name="Cronin A."/>
            <person name="Davis P."/>
            <person name="Doggett J."/>
            <person name="Feltwell T."/>
            <person name="Goble A."/>
            <person name="Hamlin N."/>
            <person name="Hauser H."/>
            <person name="Holroyd S."/>
            <person name="Jagels K."/>
            <person name="Leather S."/>
            <person name="Moule S."/>
            <person name="Norberczak H."/>
            <person name="O'Neil S."/>
            <person name="Ormond D."/>
            <person name="Price C."/>
            <person name="Rabbinowitsch E."/>
            <person name="Rutter S."/>
            <person name="Sanders M."/>
            <person name="Saunders D."/>
            <person name="Seeger K."/>
            <person name="Sharp S."/>
            <person name="Simmonds M."/>
            <person name="Skelton J."/>
            <person name="Squares R."/>
            <person name="Squares S."/>
            <person name="Stevens K."/>
            <person name="Unwin L."/>
            <person name="Whitehead S."/>
            <person name="Barrell B.G."/>
            <person name="Maskell D.J."/>
        </authorList>
    </citation>
    <scope>NUCLEOTIDE SEQUENCE [LARGE SCALE GENOMIC DNA]</scope>
    <source>
        <strain>Tohama I / ATCC BAA-589 / NCTC 13251</strain>
    </source>
</reference>
<accession>Q7VZE5</accession>
<evidence type="ECO:0000255" key="1">
    <source>
        <dbReference type="HAMAP-Rule" id="MF_01701"/>
    </source>
</evidence>
<keyword id="KW-0067">ATP-binding</keyword>
<keyword id="KW-0997">Cell inner membrane</keyword>
<keyword id="KW-1003">Cell membrane</keyword>
<keyword id="KW-0472">Membrane</keyword>
<keyword id="KW-0547">Nucleotide-binding</keyword>
<keyword id="KW-1185">Reference proteome</keyword>
<keyword id="KW-0764">Sulfate transport</keyword>
<keyword id="KW-1278">Translocase</keyword>
<keyword id="KW-0813">Transport</keyword>
<name>CYSA_BORPE</name>
<proteinExistence type="inferred from homology"/>
<protein>
    <recommendedName>
        <fullName evidence="1">Sulfate/thiosulfate import ATP-binding protein CysA</fullName>
        <ecNumber evidence="1">7.3.2.3</ecNumber>
    </recommendedName>
    <alternativeName>
        <fullName evidence="1">Sulfate-transporting ATPase</fullName>
    </alternativeName>
</protein>
<organism>
    <name type="scientific">Bordetella pertussis (strain Tohama I / ATCC BAA-589 / NCTC 13251)</name>
    <dbReference type="NCBI Taxonomy" id="257313"/>
    <lineage>
        <taxon>Bacteria</taxon>
        <taxon>Pseudomonadati</taxon>
        <taxon>Pseudomonadota</taxon>
        <taxon>Betaproteobacteria</taxon>
        <taxon>Burkholderiales</taxon>
        <taxon>Alcaligenaceae</taxon>
        <taxon>Bordetella</taxon>
    </lineage>
</organism>
<comment type="function">
    <text evidence="1">Part of the ABC transporter complex CysAWTP involved in sulfate/thiosulfate import. Responsible for energy coupling to the transport system.</text>
</comment>
<comment type="catalytic activity">
    <reaction evidence="1">
        <text>sulfate(out) + ATP + H2O = sulfate(in) + ADP + phosphate + H(+)</text>
        <dbReference type="Rhea" id="RHEA:10192"/>
        <dbReference type="ChEBI" id="CHEBI:15377"/>
        <dbReference type="ChEBI" id="CHEBI:15378"/>
        <dbReference type="ChEBI" id="CHEBI:16189"/>
        <dbReference type="ChEBI" id="CHEBI:30616"/>
        <dbReference type="ChEBI" id="CHEBI:43474"/>
        <dbReference type="ChEBI" id="CHEBI:456216"/>
        <dbReference type="EC" id="7.3.2.3"/>
    </reaction>
</comment>
<comment type="catalytic activity">
    <reaction evidence="1">
        <text>thiosulfate(out) + ATP + H2O = thiosulfate(in) + ADP + phosphate + H(+)</text>
        <dbReference type="Rhea" id="RHEA:29871"/>
        <dbReference type="ChEBI" id="CHEBI:15377"/>
        <dbReference type="ChEBI" id="CHEBI:15378"/>
        <dbReference type="ChEBI" id="CHEBI:30616"/>
        <dbReference type="ChEBI" id="CHEBI:33542"/>
        <dbReference type="ChEBI" id="CHEBI:43474"/>
        <dbReference type="ChEBI" id="CHEBI:456216"/>
        <dbReference type="EC" id="7.3.2.3"/>
    </reaction>
</comment>
<comment type="subunit">
    <text evidence="1">The complex is composed of two ATP-binding proteins (CysA), two transmembrane proteins (CysT and CysW) and a solute-binding protein (CysP).</text>
</comment>
<comment type="subcellular location">
    <subcellularLocation>
        <location evidence="1">Cell inner membrane</location>
        <topology evidence="1">Peripheral membrane protein</topology>
    </subcellularLocation>
</comment>
<comment type="similarity">
    <text evidence="1">Belongs to the ABC transporter superfamily. Sulfate/tungstate importer (TC 3.A.1.6) family.</text>
</comment>
<feature type="chain" id="PRO_0000092255" description="Sulfate/thiosulfate import ATP-binding protein CysA">
    <location>
        <begin position="1"/>
        <end position="354"/>
    </location>
</feature>
<feature type="domain" description="ABC transporter" evidence="1">
    <location>
        <begin position="3"/>
        <end position="237"/>
    </location>
</feature>
<feature type="binding site" evidence="1">
    <location>
        <begin position="35"/>
        <end position="42"/>
    </location>
    <ligand>
        <name>ATP</name>
        <dbReference type="ChEBI" id="CHEBI:30616"/>
    </ligand>
</feature>
<dbReference type="EC" id="7.3.2.3" evidence="1"/>
<dbReference type="EMBL" id="BX640413">
    <property type="protein sequence ID" value="CAE41270.1"/>
    <property type="molecule type" value="Genomic_DNA"/>
</dbReference>
<dbReference type="RefSeq" id="NP_879767.1">
    <property type="nucleotide sequence ID" value="NC_002929.2"/>
</dbReference>
<dbReference type="RefSeq" id="WP_010930112.1">
    <property type="nucleotide sequence ID" value="NZ_CP039022.1"/>
</dbReference>
<dbReference type="SMR" id="Q7VZE5"/>
<dbReference type="STRING" id="257313.BP0969"/>
<dbReference type="PaxDb" id="257313-BP0969"/>
<dbReference type="KEGG" id="bpe:BP0969"/>
<dbReference type="PATRIC" id="fig|257313.5.peg.1034"/>
<dbReference type="eggNOG" id="COG1118">
    <property type="taxonomic scope" value="Bacteria"/>
</dbReference>
<dbReference type="HOGENOM" id="CLU_000604_1_1_4"/>
<dbReference type="Proteomes" id="UP000002676">
    <property type="component" value="Chromosome"/>
</dbReference>
<dbReference type="GO" id="GO:0043190">
    <property type="term" value="C:ATP-binding cassette (ABC) transporter complex"/>
    <property type="evidence" value="ECO:0007669"/>
    <property type="project" value="InterPro"/>
</dbReference>
<dbReference type="GO" id="GO:0015419">
    <property type="term" value="F:ABC-type sulfate transporter activity"/>
    <property type="evidence" value="ECO:0007669"/>
    <property type="project" value="InterPro"/>
</dbReference>
<dbReference type="GO" id="GO:0102025">
    <property type="term" value="F:ABC-type thiosulfate transporter activity"/>
    <property type="evidence" value="ECO:0007669"/>
    <property type="project" value="RHEA"/>
</dbReference>
<dbReference type="GO" id="GO:0005524">
    <property type="term" value="F:ATP binding"/>
    <property type="evidence" value="ECO:0007669"/>
    <property type="project" value="UniProtKB-KW"/>
</dbReference>
<dbReference type="GO" id="GO:0016887">
    <property type="term" value="F:ATP hydrolysis activity"/>
    <property type="evidence" value="ECO:0007669"/>
    <property type="project" value="InterPro"/>
</dbReference>
<dbReference type="CDD" id="cd03296">
    <property type="entry name" value="ABC_CysA_sulfate_importer"/>
    <property type="match status" value="1"/>
</dbReference>
<dbReference type="FunFam" id="3.40.50.300:FF:000227">
    <property type="entry name" value="Sulfate/thiosulfate import ATP-binding protein CysA"/>
    <property type="match status" value="1"/>
</dbReference>
<dbReference type="Gene3D" id="3.40.50.300">
    <property type="entry name" value="P-loop containing nucleotide triphosphate hydrolases"/>
    <property type="match status" value="1"/>
</dbReference>
<dbReference type="InterPro" id="IPR003593">
    <property type="entry name" value="AAA+_ATPase"/>
</dbReference>
<dbReference type="InterPro" id="IPR050093">
    <property type="entry name" value="ABC_SmlMolc_Importer"/>
</dbReference>
<dbReference type="InterPro" id="IPR003439">
    <property type="entry name" value="ABC_transporter-like_ATP-bd"/>
</dbReference>
<dbReference type="InterPro" id="IPR017871">
    <property type="entry name" value="ABC_transporter-like_CS"/>
</dbReference>
<dbReference type="InterPro" id="IPR041193">
    <property type="entry name" value="CysA_C"/>
</dbReference>
<dbReference type="InterPro" id="IPR008995">
    <property type="entry name" value="Mo/tungstate-bd_C_term_dom"/>
</dbReference>
<dbReference type="InterPro" id="IPR027417">
    <property type="entry name" value="P-loop_NTPase"/>
</dbReference>
<dbReference type="InterPro" id="IPR005666">
    <property type="entry name" value="Sulph_transpt1"/>
</dbReference>
<dbReference type="InterPro" id="IPR024765">
    <property type="entry name" value="TOBE-like"/>
</dbReference>
<dbReference type="NCBIfam" id="TIGR00968">
    <property type="entry name" value="3a0106s01"/>
    <property type="match status" value="1"/>
</dbReference>
<dbReference type="PANTHER" id="PTHR42781">
    <property type="entry name" value="SPERMIDINE/PUTRESCINE IMPORT ATP-BINDING PROTEIN POTA"/>
    <property type="match status" value="1"/>
</dbReference>
<dbReference type="PANTHER" id="PTHR42781:SF4">
    <property type="entry name" value="SPERMIDINE_PUTRESCINE IMPORT ATP-BINDING PROTEIN POTA"/>
    <property type="match status" value="1"/>
</dbReference>
<dbReference type="Pfam" id="PF00005">
    <property type="entry name" value="ABC_tran"/>
    <property type="match status" value="1"/>
</dbReference>
<dbReference type="Pfam" id="PF17850">
    <property type="entry name" value="CysA_C_terminal"/>
    <property type="match status" value="1"/>
</dbReference>
<dbReference type="Pfam" id="PF12857">
    <property type="entry name" value="TOBE_3"/>
    <property type="match status" value="1"/>
</dbReference>
<dbReference type="SMART" id="SM00382">
    <property type="entry name" value="AAA"/>
    <property type="match status" value="1"/>
</dbReference>
<dbReference type="SUPFAM" id="SSF50331">
    <property type="entry name" value="MOP-like"/>
    <property type="match status" value="1"/>
</dbReference>
<dbReference type="SUPFAM" id="SSF52540">
    <property type="entry name" value="P-loop containing nucleoside triphosphate hydrolases"/>
    <property type="match status" value="1"/>
</dbReference>
<dbReference type="PROSITE" id="PS00211">
    <property type="entry name" value="ABC_TRANSPORTER_1"/>
    <property type="match status" value="1"/>
</dbReference>
<dbReference type="PROSITE" id="PS50893">
    <property type="entry name" value="ABC_TRANSPORTER_2"/>
    <property type="match status" value="1"/>
</dbReference>
<dbReference type="PROSITE" id="PS51237">
    <property type="entry name" value="CYSA"/>
    <property type="match status" value="1"/>
</dbReference>
<gene>
    <name evidence="1" type="primary">cysA</name>
    <name type="ordered locus">BP0969</name>
</gene>